<sequence>MDLTVLGKAAKAASFQLATASTAQKNQALASMADQLEAQSASILAANAKDIALGREAGLSDAMLDRLLLNESRLQAIANDVRNVIKLNDPVGSEIDSRVLENGMSLARRRVPLGVVGVIYEARPNVTIDIAALCLKTGNAAILRGGKETFFSNMELVKVIQSALDKAGLPAASVQYIEKPDRELVTQLLKMDDYVDMIIPRGGAGLHKMCKENSTVPVIIGGFGISHIFVDESADLDKSVAVIENAKVQRPSACNALDTLLVHQAIAKPLLDKLIAKLNGKVAFVAEPKAKALMSSAAELRDAQAGDFDTEWLSYTLGVKVVQDVQEAIEHMREHNASHSDAIMTNDLYNAELFVNTAGSAAVYVNASTRFTDGAQFGLGAEVAVSTQKLHARGPMGLEELTSYKWVGKANYLSRS</sequence>
<feature type="chain" id="PRO_0000340928" description="Gamma-glutamyl phosphate reductase">
    <location>
        <begin position="1"/>
        <end position="416"/>
    </location>
</feature>
<protein>
    <recommendedName>
        <fullName evidence="1">Gamma-glutamyl phosphate reductase</fullName>
        <shortName evidence="1">GPR</shortName>
        <ecNumber evidence="1">1.2.1.41</ecNumber>
    </recommendedName>
    <alternativeName>
        <fullName evidence="1">Glutamate-5-semialdehyde dehydrogenase</fullName>
    </alternativeName>
    <alternativeName>
        <fullName evidence="1">Glutamyl-gamma-semialdehyde dehydrogenase</fullName>
        <shortName evidence="1">GSA dehydrogenase</shortName>
    </alternativeName>
</protein>
<reference key="1">
    <citation type="submission" date="2007-03" db="EMBL/GenBank/DDBJ databases">
        <authorList>
            <person name="Heidelberg J."/>
        </authorList>
    </citation>
    <scope>NUCLEOTIDE SEQUENCE [LARGE SCALE GENOMIC DNA]</scope>
    <source>
        <strain>ATCC 39541 / Classical Ogawa 395 / O395</strain>
    </source>
</reference>
<reference key="2">
    <citation type="journal article" date="2008" name="PLoS ONE">
        <title>A recalibrated molecular clock and independent origins for the cholera pandemic clones.</title>
        <authorList>
            <person name="Feng L."/>
            <person name="Reeves P.R."/>
            <person name="Lan R."/>
            <person name="Ren Y."/>
            <person name="Gao C."/>
            <person name="Zhou Z."/>
            <person name="Ren Y."/>
            <person name="Cheng J."/>
            <person name="Wang W."/>
            <person name="Wang J."/>
            <person name="Qian W."/>
            <person name="Li D."/>
            <person name="Wang L."/>
        </authorList>
    </citation>
    <scope>NUCLEOTIDE SEQUENCE [LARGE SCALE GENOMIC DNA]</scope>
    <source>
        <strain>ATCC 39541 / Classical Ogawa 395 / O395</strain>
    </source>
</reference>
<keyword id="KW-0028">Amino-acid biosynthesis</keyword>
<keyword id="KW-0963">Cytoplasm</keyword>
<keyword id="KW-0521">NADP</keyword>
<keyword id="KW-0560">Oxidoreductase</keyword>
<keyword id="KW-0641">Proline biosynthesis</keyword>
<gene>
    <name evidence="1" type="primary">proA</name>
    <name type="ordered locus">VC0395_A1863</name>
    <name type="ordered locus">VC395_2389</name>
</gene>
<organism>
    <name type="scientific">Vibrio cholerae serotype O1 (strain ATCC 39541 / Classical Ogawa 395 / O395)</name>
    <dbReference type="NCBI Taxonomy" id="345073"/>
    <lineage>
        <taxon>Bacteria</taxon>
        <taxon>Pseudomonadati</taxon>
        <taxon>Pseudomonadota</taxon>
        <taxon>Gammaproteobacteria</taxon>
        <taxon>Vibrionales</taxon>
        <taxon>Vibrionaceae</taxon>
        <taxon>Vibrio</taxon>
    </lineage>
</organism>
<proteinExistence type="inferred from homology"/>
<dbReference type="EC" id="1.2.1.41" evidence="1"/>
<dbReference type="EMBL" id="CP000627">
    <property type="protein sequence ID" value="ABQ21276.1"/>
    <property type="status" value="ALT_INIT"/>
    <property type="molecule type" value="Genomic_DNA"/>
</dbReference>
<dbReference type="EMBL" id="CP001235">
    <property type="protein sequence ID" value="ACP10379.1"/>
    <property type="status" value="ALT_INIT"/>
    <property type="molecule type" value="Genomic_DNA"/>
</dbReference>
<dbReference type="RefSeq" id="WP_000366574.1">
    <property type="nucleotide sequence ID" value="NZ_JAACZH010000008.1"/>
</dbReference>
<dbReference type="SMR" id="A5F602"/>
<dbReference type="KEGG" id="vco:VC0395_A1863"/>
<dbReference type="KEGG" id="vcr:VC395_2389"/>
<dbReference type="PATRIC" id="fig|345073.21.peg.2303"/>
<dbReference type="eggNOG" id="COG0014">
    <property type="taxonomic scope" value="Bacteria"/>
</dbReference>
<dbReference type="HOGENOM" id="CLU_030231_0_0_6"/>
<dbReference type="UniPathway" id="UPA00098">
    <property type="reaction ID" value="UER00360"/>
</dbReference>
<dbReference type="Proteomes" id="UP000000249">
    <property type="component" value="Chromosome 2"/>
</dbReference>
<dbReference type="GO" id="GO:0005737">
    <property type="term" value="C:cytoplasm"/>
    <property type="evidence" value="ECO:0007669"/>
    <property type="project" value="UniProtKB-SubCell"/>
</dbReference>
<dbReference type="GO" id="GO:0004350">
    <property type="term" value="F:glutamate-5-semialdehyde dehydrogenase activity"/>
    <property type="evidence" value="ECO:0007669"/>
    <property type="project" value="UniProtKB-UniRule"/>
</dbReference>
<dbReference type="GO" id="GO:0050661">
    <property type="term" value="F:NADP binding"/>
    <property type="evidence" value="ECO:0007669"/>
    <property type="project" value="InterPro"/>
</dbReference>
<dbReference type="GO" id="GO:0055129">
    <property type="term" value="P:L-proline biosynthetic process"/>
    <property type="evidence" value="ECO:0007669"/>
    <property type="project" value="UniProtKB-UniRule"/>
</dbReference>
<dbReference type="CDD" id="cd07079">
    <property type="entry name" value="ALDH_F18-19_ProA-GPR"/>
    <property type="match status" value="1"/>
</dbReference>
<dbReference type="FunFam" id="3.40.309.10:FF:000028">
    <property type="entry name" value="Gamma-glutamyl phosphate reductase"/>
    <property type="match status" value="1"/>
</dbReference>
<dbReference type="Gene3D" id="3.40.605.10">
    <property type="entry name" value="Aldehyde Dehydrogenase, Chain A, domain 1"/>
    <property type="match status" value="1"/>
</dbReference>
<dbReference type="Gene3D" id="3.40.309.10">
    <property type="entry name" value="Aldehyde Dehydrogenase, Chain A, domain 2"/>
    <property type="match status" value="1"/>
</dbReference>
<dbReference type="HAMAP" id="MF_00412">
    <property type="entry name" value="ProA"/>
    <property type="match status" value="1"/>
</dbReference>
<dbReference type="InterPro" id="IPR016161">
    <property type="entry name" value="Ald_DH/histidinol_DH"/>
</dbReference>
<dbReference type="InterPro" id="IPR016163">
    <property type="entry name" value="Ald_DH_C"/>
</dbReference>
<dbReference type="InterPro" id="IPR016162">
    <property type="entry name" value="Ald_DH_N"/>
</dbReference>
<dbReference type="InterPro" id="IPR015590">
    <property type="entry name" value="Aldehyde_DH_dom"/>
</dbReference>
<dbReference type="InterPro" id="IPR020593">
    <property type="entry name" value="G-glutamylP_reductase_CS"/>
</dbReference>
<dbReference type="InterPro" id="IPR012134">
    <property type="entry name" value="Glu-5-SA_DH"/>
</dbReference>
<dbReference type="InterPro" id="IPR000965">
    <property type="entry name" value="GPR_dom"/>
</dbReference>
<dbReference type="NCBIfam" id="NF001221">
    <property type="entry name" value="PRK00197.1"/>
    <property type="match status" value="1"/>
</dbReference>
<dbReference type="NCBIfam" id="TIGR00407">
    <property type="entry name" value="proA"/>
    <property type="match status" value="1"/>
</dbReference>
<dbReference type="PANTHER" id="PTHR11063:SF8">
    <property type="entry name" value="DELTA-1-PYRROLINE-5-CARBOXYLATE SYNTHASE"/>
    <property type="match status" value="1"/>
</dbReference>
<dbReference type="PANTHER" id="PTHR11063">
    <property type="entry name" value="GLUTAMATE SEMIALDEHYDE DEHYDROGENASE"/>
    <property type="match status" value="1"/>
</dbReference>
<dbReference type="Pfam" id="PF00171">
    <property type="entry name" value="Aldedh"/>
    <property type="match status" value="1"/>
</dbReference>
<dbReference type="PIRSF" id="PIRSF000151">
    <property type="entry name" value="GPR"/>
    <property type="match status" value="1"/>
</dbReference>
<dbReference type="SUPFAM" id="SSF53720">
    <property type="entry name" value="ALDH-like"/>
    <property type="match status" value="1"/>
</dbReference>
<dbReference type="PROSITE" id="PS01223">
    <property type="entry name" value="PROA"/>
    <property type="match status" value="1"/>
</dbReference>
<name>PROA_VIBC3</name>
<accession>A5F602</accession>
<accession>C3M3N0</accession>
<evidence type="ECO:0000255" key="1">
    <source>
        <dbReference type="HAMAP-Rule" id="MF_00412"/>
    </source>
</evidence>
<evidence type="ECO:0000305" key="2"/>
<comment type="function">
    <text evidence="1">Catalyzes the NADPH-dependent reduction of L-glutamate 5-phosphate into L-glutamate 5-semialdehyde and phosphate. The product spontaneously undergoes cyclization to form 1-pyrroline-5-carboxylate.</text>
</comment>
<comment type="catalytic activity">
    <reaction evidence="1">
        <text>L-glutamate 5-semialdehyde + phosphate + NADP(+) = L-glutamyl 5-phosphate + NADPH + H(+)</text>
        <dbReference type="Rhea" id="RHEA:19541"/>
        <dbReference type="ChEBI" id="CHEBI:15378"/>
        <dbReference type="ChEBI" id="CHEBI:43474"/>
        <dbReference type="ChEBI" id="CHEBI:57783"/>
        <dbReference type="ChEBI" id="CHEBI:58066"/>
        <dbReference type="ChEBI" id="CHEBI:58274"/>
        <dbReference type="ChEBI" id="CHEBI:58349"/>
        <dbReference type="EC" id="1.2.1.41"/>
    </reaction>
</comment>
<comment type="pathway">
    <text evidence="1">Amino-acid biosynthesis; L-proline biosynthesis; L-glutamate 5-semialdehyde from L-glutamate: step 2/2.</text>
</comment>
<comment type="subcellular location">
    <subcellularLocation>
        <location evidence="1">Cytoplasm</location>
    </subcellularLocation>
</comment>
<comment type="similarity">
    <text evidence="1">Belongs to the gamma-glutamyl phosphate reductase family.</text>
</comment>
<comment type="sequence caution" evidence="2">
    <conflict type="erroneous initiation">
        <sequence resource="EMBL-CDS" id="ABQ21276"/>
    </conflict>
</comment>
<comment type="sequence caution" evidence="2">
    <conflict type="erroneous initiation">
        <sequence resource="EMBL-CDS" id="ACP10379"/>
    </conflict>
</comment>